<name>RL4_XANC8</name>
<accession>Q4URE0</accession>
<sequence>MELVITGSNNKVSVSDAVFGREFSEDLVHQVVVAYRNAGRAGTKAQKTRSEVAGTTKKSKKQKGGGARHGALTAPIFVGGGVTFAAKPRSFEQKVNRKMYRAAICAIFSELNRQGRLMIVDSFDIEATKTKGLIEKLKGMDVGKRPLIVTEEASEHLYLSARNLPYVQVRDVQGLDPVALVGADTVVITADAVKKVEEWLA</sequence>
<organism>
    <name type="scientific">Xanthomonas campestris pv. campestris (strain 8004)</name>
    <dbReference type="NCBI Taxonomy" id="314565"/>
    <lineage>
        <taxon>Bacteria</taxon>
        <taxon>Pseudomonadati</taxon>
        <taxon>Pseudomonadota</taxon>
        <taxon>Gammaproteobacteria</taxon>
        <taxon>Lysobacterales</taxon>
        <taxon>Lysobacteraceae</taxon>
        <taxon>Xanthomonas</taxon>
    </lineage>
</organism>
<protein>
    <recommendedName>
        <fullName evidence="1">Large ribosomal subunit protein uL4</fullName>
    </recommendedName>
    <alternativeName>
        <fullName evidence="3">50S ribosomal protein L4</fullName>
    </alternativeName>
</protein>
<feature type="chain" id="PRO_0000242461" description="Large ribosomal subunit protein uL4">
    <location>
        <begin position="1"/>
        <end position="201"/>
    </location>
</feature>
<feature type="region of interest" description="Disordered" evidence="2">
    <location>
        <begin position="44"/>
        <end position="68"/>
    </location>
</feature>
<gene>
    <name evidence="1" type="primary">rplD</name>
    <name type="ordered locus">XC_3339</name>
</gene>
<comment type="function">
    <text evidence="1">One of the primary rRNA binding proteins, this protein initially binds near the 5'-end of the 23S rRNA. It is important during the early stages of 50S assembly. It makes multiple contacts with different domains of the 23S rRNA in the assembled 50S subunit and ribosome.</text>
</comment>
<comment type="function">
    <text evidence="1">Forms part of the polypeptide exit tunnel.</text>
</comment>
<comment type="subunit">
    <text evidence="1">Part of the 50S ribosomal subunit.</text>
</comment>
<comment type="similarity">
    <text evidence="1">Belongs to the universal ribosomal protein uL4 family.</text>
</comment>
<proteinExistence type="inferred from homology"/>
<dbReference type="EMBL" id="CP000050">
    <property type="protein sequence ID" value="AAY50383.1"/>
    <property type="molecule type" value="Genomic_DNA"/>
</dbReference>
<dbReference type="RefSeq" id="WP_011036124.1">
    <property type="nucleotide sequence ID" value="NZ_CP155948.1"/>
</dbReference>
<dbReference type="SMR" id="Q4URE0"/>
<dbReference type="GeneID" id="58014528"/>
<dbReference type="KEGG" id="xcb:XC_3339"/>
<dbReference type="HOGENOM" id="CLU_041575_5_2_6"/>
<dbReference type="Proteomes" id="UP000000420">
    <property type="component" value="Chromosome"/>
</dbReference>
<dbReference type="GO" id="GO:1990904">
    <property type="term" value="C:ribonucleoprotein complex"/>
    <property type="evidence" value="ECO:0007669"/>
    <property type="project" value="UniProtKB-KW"/>
</dbReference>
<dbReference type="GO" id="GO:0005840">
    <property type="term" value="C:ribosome"/>
    <property type="evidence" value="ECO:0007669"/>
    <property type="project" value="UniProtKB-KW"/>
</dbReference>
<dbReference type="GO" id="GO:0019843">
    <property type="term" value="F:rRNA binding"/>
    <property type="evidence" value="ECO:0007669"/>
    <property type="project" value="UniProtKB-UniRule"/>
</dbReference>
<dbReference type="GO" id="GO:0003735">
    <property type="term" value="F:structural constituent of ribosome"/>
    <property type="evidence" value="ECO:0007669"/>
    <property type="project" value="InterPro"/>
</dbReference>
<dbReference type="GO" id="GO:0006412">
    <property type="term" value="P:translation"/>
    <property type="evidence" value="ECO:0007669"/>
    <property type="project" value="UniProtKB-UniRule"/>
</dbReference>
<dbReference type="FunFam" id="3.40.1370.10:FF:000007">
    <property type="entry name" value="50S ribosomal protein L4"/>
    <property type="match status" value="1"/>
</dbReference>
<dbReference type="Gene3D" id="3.40.1370.10">
    <property type="match status" value="1"/>
</dbReference>
<dbReference type="HAMAP" id="MF_01328_B">
    <property type="entry name" value="Ribosomal_uL4_B"/>
    <property type="match status" value="1"/>
</dbReference>
<dbReference type="InterPro" id="IPR002136">
    <property type="entry name" value="Ribosomal_uL4"/>
</dbReference>
<dbReference type="InterPro" id="IPR013005">
    <property type="entry name" value="Ribosomal_uL4-like"/>
</dbReference>
<dbReference type="InterPro" id="IPR023574">
    <property type="entry name" value="Ribosomal_uL4_dom_sf"/>
</dbReference>
<dbReference type="NCBIfam" id="TIGR03953">
    <property type="entry name" value="rplD_bact"/>
    <property type="match status" value="1"/>
</dbReference>
<dbReference type="PANTHER" id="PTHR10746">
    <property type="entry name" value="50S RIBOSOMAL PROTEIN L4"/>
    <property type="match status" value="1"/>
</dbReference>
<dbReference type="PANTHER" id="PTHR10746:SF6">
    <property type="entry name" value="LARGE RIBOSOMAL SUBUNIT PROTEIN UL4M"/>
    <property type="match status" value="1"/>
</dbReference>
<dbReference type="Pfam" id="PF00573">
    <property type="entry name" value="Ribosomal_L4"/>
    <property type="match status" value="1"/>
</dbReference>
<dbReference type="SUPFAM" id="SSF52166">
    <property type="entry name" value="Ribosomal protein L4"/>
    <property type="match status" value="1"/>
</dbReference>
<reference key="1">
    <citation type="journal article" date="2005" name="Genome Res.">
        <title>Comparative and functional genomic analyses of the pathogenicity of phytopathogen Xanthomonas campestris pv. campestris.</title>
        <authorList>
            <person name="Qian W."/>
            <person name="Jia Y."/>
            <person name="Ren S.-X."/>
            <person name="He Y.-Q."/>
            <person name="Feng J.-X."/>
            <person name="Lu L.-F."/>
            <person name="Sun Q."/>
            <person name="Ying G."/>
            <person name="Tang D.-J."/>
            <person name="Tang H."/>
            <person name="Wu W."/>
            <person name="Hao P."/>
            <person name="Wang L."/>
            <person name="Jiang B.-L."/>
            <person name="Zeng S."/>
            <person name="Gu W.-Y."/>
            <person name="Lu G."/>
            <person name="Rong L."/>
            <person name="Tian Y."/>
            <person name="Yao Z."/>
            <person name="Fu G."/>
            <person name="Chen B."/>
            <person name="Fang R."/>
            <person name="Qiang B."/>
            <person name="Chen Z."/>
            <person name="Zhao G.-P."/>
            <person name="Tang J.-L."/>
            <person name="He C."/>
        </authorList>
    </citation>
    <scope>NUCLEOTIDE SEQUENCE [LARGE SCALE GENOMIC DNA]</scope>
    <source>
        <strain>8004</strain>
    </source>
</reference>
<evidence type="ECO:0000255" key="1">
    <source>
        <dbReference type="HAMAP-Rule" id="MF_01328"/>
    </source>
</evidence>
<evidence type="ECO:0000256" key="2">
    <source>
        <dbReference type="SAM" id="MobiDB-lite"/>
    </source>
</evidence>
<evidence type="ECO:0000305" key="3"/>
<keyword id="KW-0687">Ribonucleoprotein</keyword>
<keyword id="KW-0689">Ribosomal protein</keyword>
<keyword id="KW-0694">RNA-binding</keyword>
<keyword id="KW-0699">rRNA-binding</keyword>